<name>CRL_SERP5</name>
<gene>
    <name evidence="1" type="primary">crl</name>
    <name type="ordered locus">Spro_0966</name>
</gene>
<sequence length="133" mass="15633">MTLPSGHPKSRLMKRFASLGPYLREGQCENDRFFFDCLAVCVNVKPAPELREFWGWWIELHAEDTRFTYSYQFGLFDKKGQWTPEKIKDTEVKTKLETTLRDFHRRLGELLATMELTLEPAADFKEKLIKLSA</sequence>
<feature type="chain" id="PRO_1000065788" description="Sigma factor-binding protein Crl">
    <location>
        <begin position="1"/>
        <end position="133"/>
    </location>
</feature>
<feature type="region of interest" description="Essential for activity" evidence="1">
    <location>
        <begin position="99"/>
        <end position="122"/>
    </location>
</feature>
<accession>A8GAD2</accession>
<comment type="function">
    <text evidence="1">Binds to the sigma-S subunit of RNA polymerase, activating expression of sigma-S-regulated genes. Stimulates RNA polymerase holoenzyme formation and may bind to several other sigma factors, such as sigma-70 and sigma-32.</text>
</comment>
<comment type="subcellular location">
    <subcellularLocation>
        <location evidence="1">Cytoplasm</location>
    </subcellularLocation>
</comment>
<comment type="similarity">
    <text evidence="1">Belongs to the Crl family.</text>
</comment>
<keyword id="KW-0010">Activator</keyword>
<keyword id="KW-0963">Cytoplasm</keyword>
<keyword id="KW-0804">Transcription</keyword>
<keyword id="KW-0805">Transcription regulation</keyword>
<dbReference type="EMBL" id="CP000826">
    <property type="protein sequence ID" value="ABV40072.1"/>
    <property type="molecule type" value="Genomic_DNA"/>
</dbReference>
<dbReference type="SMR" id="A8GAD2"/>
<dbReference type="STRING" id="399741.Spro_0966"/>
<dbReference type="KEGG" id="spe:Spro_0966"/>
<dbReference type="eggNOG" id="ENOG502ZQ8E">
    <property type="taxonomic scope" value="Bacteria"/>
</dbReference>
<dbReference type="HOGENOM" id="CLU_136773_0_0_6"/>
<dbReference type="OrthoDB" id="6428303at2"/>
<dbReference type="GO" id="GO:0005737">
    <property type="term" value="C:cytoplasm"/>
    <property type="evidence" value="ECO:0007669"/>
    <property type="project" value="UniProtKB-SubCell"/>
</dbReference>
<dbReference type="GO" id="GO:0045893">
    <property type="term" value="P:positive regulation of DNA-templated transcription"/>
    <property type="evidence" value="ECO:0007669"/>
    <property type="project" value="UniProtKB-UniRule"/>
</dbReference>
<dbReference type="Gene3D" id="3.30.310.230">
    <property type="entry name" value="Sigma factor-binding protein Crl monomer"/>
    <property type="match status" value="1"/>
</dbReference>
<dbReference type="HAMAP" id="MF_01178">
    <property type="entry name" value="Crl"/>
    <property type="match status" value="1"/>
</dbReference>
<dbReference type="InterPro" id="IPR009986">
    <property type="entry name" value="Tscrpt_reg_Crl"/>
</dbReference>
<dbReference type="InterPro" id="IPR038208">
    <property type="entry name" value="Tscrpt_reg_Crl_sf"/>
</dbReference>
<dbReference type="NCBIfam" id="NF008217">
    <property type="entry name" value="PRK10984.1"/>
    <property type="match status" value="1"/>
</dbReference>
<dbReference type="Pfam" id="PF07417">
    <property type="entry name" value="Crl"/>
    <property type="match status" value="1"/>
</dbReference>
<organism>
    <name type="scientific">Serratia proteamaculans (strain 568)</name>
    <dbReference type="NCBI Taxonomy" id="399741"/>
    <lineage>
        <taxon>Bacteria</taxon>
        <taxon>Pseudomonadati</taxon>
        <taxon>Pseudomonadota</taxon>
        <taxon>Gammaproteobacteria</taxon>
        <taxon>Enterobacterales</taxon>
        <taxon>Yersiniaceae</taxon>
        <taxon>Serratia</taxon>
    </lineage>
</organism>
<proteinExistence type="inferred from homology"/>
<protein>
    <recommendedName>
        <fullName evidence="1">Sigma factor-binding protein Crl</fullName>
    </recommendedName>
</protein>
<reference key="1">
    <citation type="submission" date="2007-09" db="EMBL/GenBank/DDBJ databases">
        <title>Complete sequence of chromosome of Serratia proteamaculans 568.</title>
        <authorList>
            <consortium name="US DOE Joint Genome Institute"/>
            <person name="Copeland A."/>
            <person name="Lucas S."/>
            <person name="Lapidus A."/>
            <person name="Barry K."/>
            <person name="Glavina del Rio T."/>
            <person name="Dalin E."/>
            <person name="Tice H."/>
            <person name="Pitluck S."/>
            <person name="Chain P."/>
            <person name="Malfatti S."/>
            <person name="Shin M."/>
            <person name="Vergez L."/>
            <person name="Schmutz J."/>
            <person name="Larimer F."/>
            <person name="Land M."/>
            <person name="Hauser L."/>
            <person name="Kyrpides N."/>
            <person name="Kim E."/>
            <person name="Taghavi S."/>
            <person name="Newman L."/>
            <person name="Vangronsveld J."/>
            <person name="van der Lelie D."/>
            <person name="Richardson P."/>
        </authorList>
    </citation>
    <scope>NUCLEOTIDE SEQUENCE [LARGE SCALE GENOMIC DNA]</scope>
    <source>
        <strain>568</strain>
    </source>
</reference>
<evidence type="ECO:0000255" key="1">
    <source>
        <dbReference type="HAMAP-Rule" id="MF_01178"/>
    </source>
</evidence>